<protein>
    <recommendedName>
        <fullName evidence="1">4-hydroxy-2-oxovalerate aldolase 1</fullName>
        <shortName evidence="1">HOA 1</shortName>
        <ecNumber evidence="1">4.1.3.39</ecNumber>
    </recommendedName>
    <alternativeName>
        <fullName evidence="1">4-hydroxy-2-keto-pentanoic acid aldolase 1</fullName>
    </alternativeName>
    <alternativeName>
        <fullName evidence="1">4-hydroxy-2-oxopentanoate aldolase 1</fullName>
    </alternativeName>
</protein>
<sequence length="363" mass="38629">MTSDIFFDPIWDVRMTDTSLRDGSHHKRHQFTKDEVGAIVAALDTAGVPVIEVTHGDGLGGSSFNYGFSKTPEQELIKLAAETAKEAKIAFLMLPGVGTKEDIKEAQNNGGSICRIATHCTEADVSIQHFGLARELGLETVGFLMMSHTIPPEKLAQQARIMADAGCQCVYVVDSAGALVLEGVRDRVAALVAELGDDAQVGFHGHENLGLGVANSVEAVRAGAKQIDGSCRRFGAGAGNAPVEALIGVFDKIGVKTGIDFFDIADAAEEVVAPAMPAECLLDRNALIMGYSGVYSSFLKHAIRQSERYGVPAHQLLHRAGQRKLIGGQEDQLIDIALEIKREMESDAAGRQSHAIGGSPRKG</sequence>
<comment type="catalytic activity">
    <reaction evidence="1">
        <text>(S)-4-hydroxy-2-oxopentanoate = acetaldehyde + pyruvate</text>
        <dbReference type="Rhea" id="RHEA:22624"/>
        <dbReference type="ChEBI" id="CHEBI:15343"/>
        <dbReference type="ChEBI" id="CHEBI:15361"/>
        <dbReference type="ChEBI" id="CHEBI:73143"/>
        <dbReference type="EC" id="4.1.3.39"/>
    </reaction>
</comment>
<comment type="similarity">
    <text evidence="1">Belongs to the 4-hydroxy-2-oxovalerate aldolase family.</text>
</comment>
<accession>A3Q4B9</accession>
<reference key="1">
    <citation type="submission" date="2007-02" db="EMBL/GenBank/DDBJ databases">
        <title>Complete sequence of Mycobacterium sp. JLS.</title>
        <authorList>
            <consortium name="US DOE Joint Genome Institute"/>
            <person name="Copeland A."/>
            <person name="Lucas S."/>
            <person name="Lapidus A."/>
            <person name="Barry K."/>
            <person name="Detter J.C."/>
            <person name="Glavina del Rio T."/>
            <person name="Hammon N."/>
            <person name="Israni S."/>
            <person name="Dalin E."/>
            <person name="Tice H."/>
            <person name="Pitluck S."/>
            <person name="Chain P."/>
            <person name="Malfatti S."/>
            <person name="Shin M."/>
            <person name="Vergez L."/>
            <person name="Schmutz J."/>
            <person name="Larimer F."/>
            <person name="Land M."/>
            <person name="Hauser L."/>
            <person name="Kyrpides N."/>
            <person name="Mikhailova N."/>
            <person name="Miller C.D."/>
            <person name="Anderson A.J."/>
            <person name="Sims R.C."/>
            <person name="Richardson P."/>
        </authorList>
    </citation>
    <scope>NUCLEOTIDE SEQUENCE [LARGE SCALE GENOMIC DNA]</scope>
    <source>
        <strain>JLS</strain>
    </source>
</reference>
<organism>
    <name type="scientific">Mycobacterium sp. (strain JLS)</name>
    <dbReference type="NCBI Taxonomy" id="164757"/>
    <lineage>
        <taxon>Bacteria</taxon>
        <taxon>Bacillati</taxon>
        <taxon>Actinomycetota</taxon>
        <taxon>Actinomycetes</taxon>
        <taxon>Mycobacteriales</taxon>
        <taxon>Mycobacteriaceae</taxon>
        <taxon>Mycobacterium</taxon>
    </lineage>
</organism>
<gene>
    <name type="ordered locus">Mjls_4224</name>
</gene>
<proteinExistence type="inferred from homology"/>
<evidence type="ECO:0000255" key="1">
    <source>
        <dbReference type="HAMAP-Rule" id="MF_01656"/>
    </source>
</evidence>
<keyword id="KW-0058">Aromatic hydrocarbons catabolism</keyword>
<keyword id="KW-0456">Lyase</keyword>
<keyword id="KW-0464">Manganese</keyword>
<keyword id="KW-0479">Metal-binding</keyword>
<dbReference type="EC" id="4.1.3.39" evidence="1"/>
<dbReference type="EMBL" id="CP000580">
    <property type="protein sequence ID" value="ABN99996.1"/>
    <property type="molecule type" value="Genomic_DNA"/>
</dbReference>
<dbReference type="SMR" id="A3Q4B9"/>
<dbReference type="KEGG" id="mjl:Mjls_4224"/>
<dbReference type="HOGENOM" id="CLU_049173_0_0_11"/>
<dbReference type="BioCyc" id="MSP164757:G1G8C-4265-MONOMER"/>
<dbReference type="GO" id="GO:0003852">
    <property type="term" value="F:2-isopropylmalate synthase activity"/>
    <property type="evidence" value="ECO:0007669"/>
    <property type="project" value="TreeGrafter"/>
</dbReference>
<dbReference type="GO" id="GO:0008701">
    <property type="term" value="F:4-hydroxy-2-oxovalerate aldolase activity"/>
    <property type="evidence" value="ECO:0007669"/>
    <property type="project" value="UniProtKB-UniRule"/>
</dbReference>
<dbReference type="GO" id="GO:0030145">
    <property type="term" value="F:manganese ion binding"/>
    <property type="evidence" value="ECO:0007669"/>
    <property type="project" value="UniProtKB-UniRule"/>
</dbReference>
<dbReference type="GO" id="GO:0009056">
    <property type="term" value="P:catabolic process"/>
    <property type="evidence" value="ECO:0007669"/>
    <property type="project" value="UniProtKB-KW"/>
</dbReference>
<dbReference type="GO" id="GO:0009098">
    <property type="term" value="P:L-leucine biosynthetic process"/>
    <property type="evidence" value="ECO:0007669"/>
    <property type="project" value="TreeGrafter"/>
</dbReference>
<dbReference type="CDD" id="cd07943">
    <property type="entry name" value="DRE_TIM_HOA"/>
    <property type="match status" value="1"/>
</dbReference>
<dbReference type="FunFam" id="3.20.20.70:FF:000072">
    <property type="entry name" value="4-hydroxy-2-oxovalerate aldolase"/>
    <property type="match status" value="1"/>
</dbReference>
<dbReference type="Gene3D" id="1.10.8.60">
    <property type="match status" value="1"/>
</dbReference>
<dbReference type="Gene3D" id="3.20.20.70">
    <property type="entry name" value="Aldolase class I"/>
    <property type="match status" value="1"/>
</dbReference>
<dbReference type="HAMAP" id="MF_01656">
    <property type="entry name" value="HOA"/>
    <property type="match status" value="1"/>
</dbReference>
<dbReference type="InterPro" id="IPR050073">
    <property type="entry name" value="2-IPM_HCS-like"/>
</dbReference>
<dbReference type="InterPro" id="IPR017629">
    <property type="entry name" value="4OH_2_O-val_aldolase"/>
</dbReference>
<dbReference type="InterPro" id="IPR013785">
    <property type="entry name" value="Aldolase_TIM"/>
</dbReference>
<dbReference type="InterPro" id="IPR012425">
    <property type="entry name" value="DmpG_comm"/>
</dbReference>
<dbReference type="InterPro" id="IPR035685">
    <property type="entry name" value="DRE_TIM_HOA"/>
</dbReference>
<dbReference type="InterPro" id="IPR000891">
    <property type="entry name" value="PYR_CT"/>
</dbReference>
<dbReference type="NCBIfam" id="TIGR03217">
    <property type="entry name" value="4OH_2_O_val_ald"/>
    <property type="match status" value="1"/>
</dbReference>
<dbReference type="NCBIfam" id="NF006049">
    <property type="entry name" value="PRK08195.1"/>
    <property type="match status" value="1"/>
</dbReference>
<dbReference type="PANTHER" id="PTHR10277:SF9">
    <property type="entry name" value="2-ISOPROPYLMALATE SYNTHASE 1, CHLOROPLASTIC-RELATED"/>
    <property type="match status" value="1"/>
</dbReference>
<dbReference type="PANTHER" id="PTHR10277">
    <property type="entry name" value="HOMOCITRATE SYNTHASE-RELATED"/>
    <property type="match status" value="1"/>
</dbReference>
<dbReference type="Pfam" id="PF07836">
    <property type="entry name" value="DmpG_comm"/>
    <property type="match status" value="1"/>
</dbReference>
<dbReference type="Pfam" id="PF00682">
    <property type="entry name" value="HMGL-like"/>
    <property type="match status" value="1"/>
</dbReference>
<dbReference type="SUPFAM" id="SSF51569">
    <property type="entry name" value="Aldolase"/>
    <property type="match status" value="1"/>
</dbReference>
<dbReference type="SUPFAM" id="SSF89000">
    <property type="entry name" value="post-HMGL domain-like"/>
    <property type="match status" value="1"/>
</dbReference>
<dbReference type="PROSITE" id="PS50991">
    <property type="entry name" value="PYR_CT"/>
    <property type="match status" value="1"/>
</dbReference>
<feature type="chain" id="PRO_0000387856" description="4-hydroxy-2-oxovalerate aldolase 1">
    <location>
        <begin position="1"/>
        <end position="363"/>
    </location>
</feature>
<feature type="domain" description="Pyruvate carboxyltransferase" evidence="1">
    <location>
        <begin position="13"/>
        <end position="265"/>
    </location>
</feature>
<feature type="active site" description="Proton acceptor" evidence="1">
    <location>
        <position position="25"/>
    </location>
</feature>
<feature type="binding site" evidence="1">
    <location>
        <begin position="21"/>
        <end position="22"/>
    </location>
    <ligand>
        <name>substrate</name>
    </ligand>
</feature>
<feature type="binding site" evidence="1">
    <location>
        <position position="22"/>
    </location>
    <ligand>
        <name>Mn(2+)</name>
        <dbReference type="ChEBI" id="CHEBI:29035"/>
    </ligand>
</feature>
<feature type="binding site" evidence="1">
    <location>
        <position position="175"/>
    </location>
    <ligand>
        <name>substrate</name>
    </ligand>
</feature>
<feature type="binding site" evidence="1">
    <location>
        <position position="204"/>
    </location>
    <ligand>
        <name>Mn(2+)</name>
        <dbReference type="ChEBI" id="CHEBI:29035"/>
    </ligand>
</feature>
<feature type="binding site" evidence="1">
    <location>
        <position position="204"/>
    </location>
    <ligand>
        <name>substrate</name>
    </ligand>
</feature>
<feature type="binding site" evidence="1">
    <location>
        <position position="206"/>
    </location>
    <ligand>
        <name>Mn(2+)</name>
        <dbReference type="ChEBI" id="CHEBI:29035"/>
    </ligand>
</feature>
<feature type="binding site" evidence="1">
    <location>
        <position position="295"/>
    </location>
    <ligand>
        <name>substrate</name>
    </ligand>
</feature>
<feature type="site" description="Transition state stabilizer" evidence="1">
    <location>
        <position position="21"/>
    </location>
</feature>
<name>HOA1_MYCSJ</name>